<protein>
    <recommendedName>
        <fullName evidence="1">Large ribosomal subunit protein uL14c</fullName>
    </recommendedName>
    <alternativeName>
        <fullName evidence="3">50S ribosomal protein L14, chloroplastic</fullName>
    </alternativeName>
</protein>
<evidence type="ECO:0000255" key="1">
    <source>
        <dbReference type="HAMAP-Rule" id="MF_01367"/>
    </source>
</evidence>
<evidence type="ECO:0000269" key="2">
    <source>
    </source>
</evidence>
<evidence type="ECO:0000305" key="3"/>
<organism>
    <name type="scientific">Zea mays</name>
    <name type="common">Maize</name>
    <dbReference type="NCBI Taxonomy" id="4577"/>
    <lineage>
        <taxon>Eukaryota</taxon>
        <taxon>Viridiplantae</taxon>
        <taxon>Streptophyta</taxon>
        <taxon>Embryophyta</taxon>
        <taxon>Tracheophyta</taxon>
        <taxon>Spermatophyta</taxon>
        <taxon>Magnoliopsida</taxon>
        <taxon>Liliopsida</taxon>
        <taxon>Poales</taxon>
        <taxon>Poaceae</taxon>
        <taxon>PACMAD clade</taxon>
        <taxon>Panicoideae</taxon>
        <taxon>Andropogonodae</taxon>
        <taxon>Andropogoneae</taxon>
        <taxon>Tripsacinae</taxon>
        <taxon>Zea</taxon>
    </lineage>
</organism>
<dbReference type="EMBL" id="X06734">
    <property type="protein sequence ID" value="CAA29912.1"/>
    <property type="molecule type" value="Genomic_DNA"/>
</dbReference>
<dbReference type="EMBL" id="X86563">
    <property type="protein sequence ID" value="CAA60322.1"/>
    <property type="molecule type" value="Genomic_DNA"/>
</dbReference>
<dbReference type="PIR" id="S00279">
    <property type="entry name" value="R5ZM14"/>
</dbReference>
<dbReference type="RefSeq" id="NP_043060.1">
    <property type="nucleotide sequence ID" value="NC_001666.2"/>
</dbReference>
<dbReference type="SMR" id="P08529"/>
<dbReference type="FunCoup" id="P08529">
    <property type="interactions" value="455"/>
</dbReference>
<dbReference type="STRING" id="4577.P08529"/>
<dbReference type="PaxDb" id="4577-GRMZM5G804776_P01"/>
<dbReference type="GeneID" id="845213"/>
<dbReference type="KEGG" id="zma:845213"/>
<dbReference type="MaizeGDB" id="67056"/>
<dbReference type="eggNOG" id="KOG0901">
    <property type="taxonomic scope" value="Eukaryota"/>
</dbReference>
<dbReference type="HOGENOM" id="CLU_095071_2_1_1"/>
<dbReference type="InParanoid" id="P08529"/>
<dbReference type="OMA" id="HINSMII"/>
<dbReference type="OrthoDB" id="733561at2759"/>
<dbReference type="Proteomes" id="UP000007305">
    <property type="component" value="Chloroplast"/>
</dbReference>
<dbReference type="ExpressionAtlas" id="P08529">
    <property type="expression patterns" value="baseline and differential"/>
</dbReference>
<dbReference type="GO" id="GO:0043253">
    <property type="term" value="C:chloroplast ribosome"/>
    <property type="evidence" value="ECO:0000303"/>
    <property type="project" value="AgBase"/>
</dbReference>
<dbReference type="GO" id="GO:0022625">
    <property type="term" value="C:cytosolic large ribosomal subunit"/>
    <property type="evidence" value="ECO:0000318"/>
    <property type="project" value="GO_Central"/>
</dbReference>
<dbReference type="GO" id="GO:0070180">
    <property type="term" value="F:large ribosomal subunit rRNA binding"/>
    <property type="evidence" value="ECO:0000318"/>
    <property type="project" value="GO_Central"/>
</dbReference>
<dbReference type="GO" id="GO:0003735">
    <property type="term" value="F:structural constituent of ribosome"/>
    <property type="evidence" value="ECO:0000318"/>
    <property type="project" value="GO_Central"/>
</dbReference>
<dbReference type="GO" id="GO:0006412">
    <property type="term" value="P:translation"/>
    <property type="evidence" value="ECO:0007669"/>
    <property type="project" value="UniProtKB-UniRule"/>
</dbReference>
<dbReference type="CDD" id="cd00337">
    <property type="entry name" value="Ribosomal_uL14"/>
    <property type="match status" value="1"/>
</dbReference>
<dbReference type="FunFam" id="2.40.150.20:FF:000002">
    <property type="entry name" value="50S ribosomal protein L14, chloroplastic"/>
    <property type="match status" value="1"/>
</dbReference>
<dbReference type="Gene3D" id="2.40.150.20">
    <property type="entry name" value="Ribosomal protein L14"/>
    <property type="match status" value="1"/>
</dbReference>
<dbReference type="HAMAP" id="MF_01367">
    <property type="entry name" value="Ribosomal_uL14"/>
    <property type="match status" value="1"/>
</dbReference>
<dbReference type="InterPro" id="IPR000218">
    <property type="entry name" value="Ribosomal_uL14"/>
</dbReference>
<dbReference type="InterPro" id="IPR005745">
    <property type="entry name" value="Ribosomal_uL14_bac-type"/>
</dbReference>
<dbReference type="InterPro" id="IPR019972">
    <property type="entry name" value="Ribosomal_uL14_CS"/>
</dbReference>
<dbReference type="InterPro" id="IPR036853">
    <property type="entry name" value="Ribosomal_uL14_sf"/>
</dbReference>
<dbReference type="NCBIfam" id="TIGR01067">
    <property type="entry name" value="rplN_bact"/>
    <property type="match status" value="1"/>
</dbReference>
<dbReference type="PANTHER" id="PTHR11761">
    <property type="entry name" value="50S/60S RIBOSOMAL PROTEIN L14/L23"/>
    <property type="match status" value="1"/>
</dbReference>
<dbReference type="PANTHER" id="PTHR11761:SF3">
    <property type="entry name" value="LARGE RIBOSOMAL SUBUNIT PROTEIN UL14M"/>
    <property type="match status" value="1"/>
</dbReference>
<dbReference type="Pfam" id="PF00238">
    <property type="entry name" value="Ribosomal_L14"/>
    <property type="match status" value="1"/>
</dbReference>
<dbReference type="SMART" id="SM01374">
    <property type="entry name" value="Ribosomal_L14"/>
    <property type="match status" value="1"/>
</dbReference>
<dbReference type="SUPFAM" id="SSF50193">
    <property type="entry name" value="Ribosomal protein L14"/>
    <property type="match status" value="1"/>
</dbReference>
<dbReference type="PROSITE" id="PS00049">
    <property type="entry name" value="RIBOSOMAL_L14"/>
    <property type="match status" value="1"/>
</dbReference>
<geneLocation type="chloroplast"/>
<name>RK14_MAIZE</name>
<accession>P08529</accession>
<sequence length="123" mass="13494">MIQPQTLLNVADNSGARKLMCIRVIGAAGNQRYARIGDVIIAVIKDAVPQMPLERSEVIRAVIVRTRKEFKGDDGIIIRYDDNAAVIIDQKGNPKGTRVFGAVAEELRELNLTKIVSLAPEVL</sequence>
<keyword id="KW-0150">Chloroplast</keyword>
<keyword id="KW-0934">Plastid</keyword>
<keyword id="KW-1185">Reference proteome</keyword>
<keyword id="KW-0687">Ribonucleoprotein</keyword>
<keyword id="KW-0689">Ribosomal protein</keyword>
<keyword id="KW-0694">RNA-binding</keyword>
<keyword id="KW-0699">rRNA-binding</keyword>
<feature type="chain" id="PRO_0000128590" description="Large ribosomal subunit protein uL14c">
    <location>
        <begin position="1"/>
        <end position="123"/>
    </location>
</feature>
<comment type="function">
    <text evidence="1">Binds to 23S rRNA.</text>
</comment>
<comment type="subunit">
    <text evidence="1 2">Part of the 50S ribosomal subunit (By similarity). Interacts with IOJAP.</text>
</comment>
<comment type="subcellular location">
    <subcellularLocation>
        <location>Plastid</location>
        <location>Chloroplast</location>
    </subcellularLocation>
</comment>
<comment type="similarity">
    <text evidence="1">Belongs to the universal ribosomal protein uL14 family.</text>
</comment>
<proteinExistence type="evidence at protein level"/>
<gene>
    <name evidence="1" type="primary">rpl14</name>
</gene>
<reference key="1">
    <citation type="journal article" date="1988" name="Eur. J. Biochem.">
        <title>Nucleotide sequence and linkage map position of the genes for ribosomal proteins L14 and S8 in the maize chloroplast genome.</title>
        <authorList>
            <person name="Markmann-Mulisch U."/>
            <person name="Subramanian A.R."/>
        </authorList>
    </citation>
    <scope>NUCLEOTIDE SEQUENCE [GENOMIC DNA]</scope>
</reference>
<reference key="2">
    <citation type="journal article" date="1995" name="J. Mol. Biol.">
        <title>Complete sequence of the maize chloroplast genome: gene content, hotspots of divergence and fine tuning of genetic information by transcript editing.</title>
        <authorList>
            <person name="Maier R.M."/>
            <person name="Neckermann K."/>
            <person name="Igloi G.L."/>
            <person name="Koessel H."/>
        </authorList>
    </citation>
    <scope>NUCLEOTIDE SEQUENCE [LARGE SCALE GENOMIC DNA]</scope>
    <source>
        <strain>cv. B73</strain>
    </source>
</reference>
<reference key="3">
    <citation type="journal article" date="2012" name="PLoS Genet.">
        <title>RsfA (YbeB) proteins are conserved ribosomal silencing factors.</title>
        <authorList>
            <person name="Hauser R."/>
            <person name="Pech M."/>
            <person name="Kijek J."/>
            <person name="Yamamoto H."/>
            <person name="Titz B."/>
            <person name="Naeve F."/>
            <person name="Tovchigrechko A."/>
            <person name="Yamamoto K."/>
            <person name="Szaflarski W."/>
            <person name="Takeuchi N."/>
            <person name="Stellberger T."/>
            <person name="Diefenbacher M.E."/>
            <person name="Nierhaus K.H."/>
            <person name="Uetz P."/>
        </authorList>
    </citation>
    <scope>INTERACTION WITH IOJAP</scope>
</reference>